<organism>
    <name type="scientific">Apocynum cannabinum</name>
    <name type="common">Hemp dogbane</name>
    <dbReference type="NCBI Taxonomy" id="13339"/>
    <lineage>
        <taxon>Eukaryota</taxon>
        <taxon>Viridiplantae</taxon>
        <taxon>Streptophyta</taxon>
        <taxon>Embryophyta</taxon>
        <taxon>Tracheophyta</taxon>
        <taxon>Spermatophyta</taxon>
        <taxon>Magnoliopsida</taxon>
        <taxon>eudicotyledons</taxon>
        <taxon>Gunneridae</taxon>
        <taxon>Pentapetalae</taxon>
        <taxon>asterids</taxon>
        <taxon>lamiids</taxon>
        <taxon>Gentianales</taxon>
        <taxon>Apocynaceae</taxon>
        <taxon>Apocynoideae</taxon>
        <taxon>Apocyneae</taxon>
        <taxon>Apocyinae</taxon>
        <taxon>Apocynum</taxon>
    </lineage>
</organism>
<evidence type="ECO:0000255" key="1">
    <source>
        <dbReference type="HAMAP-Rule" id="MF_01338"/>
    </source>
</evidence>
<sequence>DILAAFRVTPQPGVPPEEAGAAVAAESSTGTWTTVWTDGLTSLDRYKGRCYHIDAVPGEEDQFIAYVAYPLDLFEEGSVTNMLTSIVGNVFGFKALRALRLEDLRIPPAYVKTFQGPPHGIQVERDKLNKYGRPLLGCTIKPKLGLSAKNYGRAVYECLRGGLDFTKDDENVNSQPFMRWRDRFLFCAEAIFKSQAETGEIKGHYLNATAGTCEEMYKRAIFARELGVPIVMHDYLTGGFTANTSLAHYCRDNGLLLHIHXAMHAVIDRQKNHGMHFRVLAKALRMSGGDHIHAGTVVGKLEGERDITLGFVDLLRDDFIEKDRSRGIYFTQDWVSLPGVLXVASGGIHVWHMPALTEIFGDDSVLQFGGGTLGHPWGNAPGAVANRVALEACVQARNEGRDLAVEGNEIIREASKWSPELAAACEVWKEIRFNFKAVDTL</sequence>
<feature type="chain" id="PRO_0000062360" description="Ribulose bisphosphate carboxylase large chain">
    <location>
        <begin position="1" status="less than"/>
        <end position="441"/>
    </location>
</feature>
<feature type="active site" description="Proton acceptor" evidence="1">
    <location>
        <position position="141"/>
    </location>
</feature>
<feature type="active site" description="Proton acceptor" evidence="1">
    <location>
        <position position="260"/>
    </location>
</feature>
<feature type="binding site" description="in homodimeric partner" evidence="1">
    <location>
        <position position="89"/>
    </location>
    <ligand>
        <name>substrate</name>
    </ligand>
</feature>
<feature type="binding site" evidence="1">
    <location>
        <position position="139"/>
    </location>
    <ligand>
        <name>substrate</name>
    </ligand>
</feature>
<feature type="binding site" evidence="1">
    <location>
        <position position="143"/>
    </location>
    <ligand>
        <name>substrate</name>
    </ligand>
</feature>
<feature type="binding site" description="via carbamate group" evidence="1">
    <location>
        <position position="167"/>
    </location>
    <ligand>
        <name>Mg(2+)</name>
        <dbReference type="ChEBI" id="CHEBI:18420"/>
    </ligand>
</feature>
<feature type="binding site" evidence="1">
    <location>
        <position position="169"/>
    </location>
    <ligand>
        <name>Mg(2+)</name>
        <dbReference type="ChEBI" id="CHEBI:18420"/>
    </ligand>
</feature>
<feature type="binding site" evidence="1">
    <location>
        <position position="170"/>
    </location>
    <ligand>
        <name>Mg(2+)</name>
        <dbReference type="ChEBI" id="CHEBI:18420"/>
    </ligand>
</feature>
<feature type="binding site" evidence="1">
    <location>
        <position position="261"/>
    </location>
    <ligand>
        <name>substrate</name>
    </ligand>
</feature>
<feature type="binding site" evidence="1">
    <location>
        <position position="293"/>
    </location>
    <ligand>
        <name>substrate</name>
    </ligand>
</feature>
<feature type="binding site" evidence="1">
    <location>
        <position position="345"/>
    </location>
    <ligand>
        <name>substrate</name>
    </ligand>
</feature>
<feature type="site" description="Transition state stabilizer" evidence="1">
    <location>
        <position position="300"/>
    </location>
</feature>
<feature type="modified residue" description="N6-carboxylysine" evidence="1">
    <location>
        <position position="167"/>
    </location>
</feature>
<feature type="disulfide bond" description="Interchain; in linked form" evidence="1">
    <location>
        <position position="213"/>
    </location>
</feature>
<feature type="non-terminal residue">
    <location>
        <position position="1"/>
    </location>
</feature>
<geneLocation type="chloroplast"/>
<reference key="1">
    <citation type="journal article" date="1992" name="Ann. Mo. Bot. Gard.">
        <title>Monophyly of the Asteridae and identification of their major lineages inferred from DNA sequences of rbcL.</title>
        <authorList>
            <person name="Olmstead R.G."/>
            <person name="Michaels H.J."/>
            <person name="Scott K.M."/>
            <person name="Palmer J.D."/>
        </authorList>
        <dbReference type="AGRICOLA" id="IND93014998"/>
    </citation>
    <scope>NUCLEOTIDE SEQUENCE [GENOMIC DNA]</scope>
</reference>
<name>RBL_APOCA</name>
<comment type="function">
    <text evidence="1">RuBisCO catalyzes two reactions: the carboxylation of D-ribulose 1,5-bisphosphate, the primary event in carbon dioxide fixation, as well as the oxidative fragmentation of the pentose substrate in the photorespiration process. Both reactions occur simultaneously and in competition at the same active site.</text>
</comment>
<comment type="catalytic activity">
    <reaction evidence="1">
        <text>2 (2R)-3-phosphoglycerate + 2 H(+) = D-ribulose 1,5-bisphosphate + CO2 + H2O</text>
        <dbReference type="Rhea" id="RHEA:23124"/>
        <dbReference type="ChEBI" id="CHEBI:15377"/>
        <dbReference type="ChEBI" id="CHEBI:15378"/>
        <dbReference type="ChEBI" id="CHEBI:16526"/>
        <dbReference type="ChEBI" id="CHEBI:57870"/>
        <dbReference type="ChEBI" id="CHEBI:58272"/>
        <dbReference type="EC" id="4.1.1.39"/>
    </reaction>
</comment>
<comment type="catalytic activity">
    <reaction evidence="1">
        <text>D-ribulose 1,5-bisphosphate + O2 = 2-phosphoglycolate + (2R)-3-phosphoglycerate + 2 H(+)</text>
        <dbReference type="Rhea" id="RHEA:36631"/>
        <dbReference type="ChEBI" id="CHEBI:15378"/>
        <dbReference type="ChEBI" id="CHEBI:15379"/>
        <dbReference type="ChEBI" id="CHEBI:57870"/>
        <dbReference type="ChEBI" id="CHEBI:58033"/>
        <dbReference type="ChEBI" id="CHEBI:58272"/>
    </reaction>
</comment>
<comment type="cofactor">
    <cofactor evidence="1">
        <name>Mg(2+)</name>
        <dbReference type="ChEBI" id="CHEBI:18420"/>
    </cofactor>
    <text evidence="1">Binds 1 Mg(2+) ion per subunit.</text>
</comment>
<comment type="subunit">
    <text evidence="1">Heterohexadecamer of 8 large chains and 8 small chains; disulfide-linked. The disulfide link is formed within the large subunit homodimers.</text>
</comment>
<comment type="subcellular location">
    <subcellularLocation>
        <location>Plastid</location>
        <location>Chloroplast</location>
    </subcellularLocation>
</comment>
<comment type="PTM">
    <text evidence="1">The disulfide bond which can form in the large chain dimeric partners within the hexadecamer appears to be associated with oxidative stress and protein turnover.</text>
</comment>
<comment type="miscellaneous">
    <text evidence="1">The basic functional RuBisCO is composed of a large chain homodimer in a 'head-to-tail' conformation. In form I RuBisCO this homodimer is arranged in a barrel-like tetramer with the small subunits forming a tetrameric 'cap' on each end of the 'barrel'.</text>
</comment>
<comment type="similarity">
    <text evidence="1">Belongs to the RuBisCO large chain family. Type I subfamily.</text>
</comment>
<gene>
    <name evidence="1" type="primary">rbcL</name>
</gene>
<dbReference type="EC" id="4.1.1.39" evidence="1"/>
<dbReference type="EMBL" id="L11678">
    <property type="protein sequence ID" value="AAA84022.1"/>
    <property type="molecule type" value="Genomic_DNA"/>
</dbReference>
<dbReference type="GO" id="GO:0009507">
    <property type="term" value="C:chloroplast"/>
    <property type="evidence" value="ECO:0007669"/>
    <property type="project" value="UniProtKB-SubCell"/>
</dbReference>
<dbReference type="GO" id="GO:0000287">
    <property type="term" value="F:magnesium ion binding"/>
    <property type="evidence" value="ECO:0007669"/>
    <property type="project" value="InterPro"/>
</dbReference>
<dbReference type="GO" id="GO:0004497">
    <property type="term" value="F:monooxygenase activity"/>
    <property type="evidence" value="ECO:0007669"/>
    <property type="project" value="UniProtKB-KW"/>
</dbReference>
<dbReference type="GO" id="GO:0016984">
    <property type="term" value="F:ribulose-bisphosphate carboxylase activity"/>
    <property type="evidence" value="ECO:0007669"/>
    <property type="project" value="UniProtKB-EC"/>
</dbReference>
<dbReference type="GO" id="GO:0009853">
    <property type="term" value="P:photorespiration"/>
    <property type="evidence" value="ECO:0007669"/>
    <property type="project" value="UniProtKB-KW"/>
</dbReference>
<dbReference type="GO" id="GO:0019253">
    <property type="term" value="P:reductive pentose-phosphate cycle"/>
    <property type="evidence" value="ECO:0007669"/>
    <property type="project" value="UniProtKB-KW"/>
</dbReference>
<dbReference type="CDD" id="cd08212">
    <property type="entry name" value="RuBisCO_large_I"/>
    <property type="match status" value="1"/>
</dbReference>
<dbReference type="FunFam" id="3.20.20.110:FF:000001">
    <property type="entry name" value="Ribulose bisphosphate carboxylase large chain"/>
    <property type="match status" value="1"/>
</dbReference>
<dbReference type="Gene3D" id="3.20.20.110">
    <property type="entry name" value="Ribulose bisphosphate carboxylase, large subunit, C-terminal domain"/>
    <property type="match status" value="1"/>
</dbReference>
<dbReference type="Gene3D" id="3.30.70.150">
    <property type="entry name" value="RuBisCO large subunit, N-terminal domain"/>
    <property type="match status" value="1"/>
</dbReference>
<dbReference type="HAMAP" id="MF_01338">
    <property type="entry name" value="RuBisCO_L_type1"/>
    <property type="match status" value="1"/>
</dbReference>
<dbReference type="InterPro" id="IPR033966">
    <property type="entry name" value="RuBisCO"/>
</dbReference>
<dbReference type="InterPro" id="IPR020878">
    <property type="entry name" value="RuBisCo_large_chain_AS"/>
</dbReference>
<dbReference type="InterPro" id="IPR000685">
    <property type="entry name" value="RuBisCO_lsu_C"/>
</dbReference>
<dbReference type="InterPro" id="IPR036376">
    <property type="entry name" value="RuBisCO_lsu_C_sf"/>
</dbReference>
<dbReference type="InterPro" id="IPR017443">
    <property type="entry name" value="RuBisCO_lsu_fd_N"/>
</dbReference>
<dbReference type="InterPro" id="IPR036422">
    <property type="entry name" value="RuBisCO_lsu_N_sf"/>
</dbReference>
<dbReference type="InterPro" id="IPR020888">
    <property type="entry name" value="RuBisCO_lsuI"/>
</dbReference>
<dbReference type="NCBIfam" id="NF003252">
    <property type="entry name" value="PRK04208.1"/>
    <property type="match status" value="1"/>
</dbReference>
<dbReference type="PANTHER" id="PTHR42704">
    <property type="entry name" value="RIBULOSE BISPHOSPHATE CARBOXYLASE"/>
    <property type="match status" value="1"/>
</dbReference>
<dbReference type="PANTHER" id="PTHR42704:SF16">
    <property type="entry name" value="RIBULOSE BISPHOSPHATE CARBOXYLASE LARGE CHAIN"/>
    <property type="match status" value="1"/>
</dbReference>
<dbReference type="Pfam" id="PF00016">
    <property type="entry name" value="RuBisCO_large"/>
    <property type="match status" value="1"/>
</dbReference>
<dbReference type="Pfam" id="PF02788">
    <property type="entry name" value="RuBisCO_large_N"/>
    <property type="match status" value="1"/>
</dbReference>
<dbReference type="SFLD" id="SFLDS00014">
    <property type="entry name" value="RuBisCO"/>
    <property type="match status" value="1"/>
</dbReference>
<dbReference type="SFLD" id="SFLDG00301">
    <property type="entry name" value="RuBisCO-like_proteins"/>
    <property type="match status" value="1"/>
</dbReference>
<dbReference type="SUPFAM" id="SSF51649">
    <property type="entry name" value="RuBisCo, C-terminal domain"/>
    <property type="match status" value="1"/>
</dbReference>
<dbReference type="SUPFAM" id="SSF54966">
    <property type="entry name" value="RuBisCO, large subunit, small (N-terminal) domain"/>
    <property type="match status" value="1"/>
</dbReference>
<dbReference type="PROSITE" id="PS00157">
    <property type="entry name" value="RUBISCO_LARGE"/>
    <property type="match status" value="1"/>
</dbReference>
<keyword id="KW-0113">Calvin cycle</keyword>
<keyword id="KW-0120">Carbon dioxide fixation</keyword>
<keyword id="KW-0150">Chloroplast</keyword>
<keyword id="KW-1015">Disulfide bond</keyword>
<keyword id="KW-0456">Lyase</keyword>
<keyword id="KW-0460">Magnesium</keyword>
<keyword id="KW-0479">Metal-binding</keyword>
<keyword id="KW-0503">Monooxygenase</keyword>
<keyword id="KW-0560">Oxidoreductase</keyword>
<keyword id="KW-0601">Photorespiration</keyword>
<keyword id="KW-0602">Photosynthesis</keyword>
<keyword id="KW-0934">Plastid</keyword>
<proteinExistence type="inferred from homology"/>
<protein>
    <recommendedName>
        <fullName evidence="1">Ribulose bisphosphate carboxylase large chain</fullName>
        <shortName evidence="1">RuBisCO large subunit</shortName>
        <ecNumber evidence="1">4.1.1.39</ecNumber>
    </recommendedName>
</protein>
<accession>Q05984</accession>